<protein>
    <recommendedName>
        <fullName evidence="1">Putative pre-16S rRNA nuclease</fullName>
        <ecNumber evidence="1">3.1.-.-</ecNumber>
    </recommendedName>
</protein>
<organism>
    <name type="scientific">Jannaschia sp. (strain CCS1)</name>
    <dbReference type="NCBI Taxonomy" id="290400"/>
    <lineage>
        <taxon>Bacteria</taxon>
        <taxon>Pseudomonadati</taxon>
        <taxon>Pseudomonadota</taxon>
        <taxon>Alphaproteobacteria</taxon>
        <taxon>Rhodobacterales</taxon>
        <taxon>Roseobacteraceae</taxon>
        <taxon>Jannaschia</taxon>
    </lineage>
</organism>
<reference key="1">
    <citation type="submission" date="2006-02" db="EMBL/GenBank/DDBJ databases">
        <title>Complete sequence of chromosome of Jannaschia sp. CCS1.</title>
        <authorList>
            <consortium name="US DOE Joint Genome Institute"/>
            <person name="Copeland A."/>
            <person name="Lucas S."/>
            <person name="Lapidus A."/>
            <person name="Barry K."/>
            <person name="Detter J.C."/>
            <person name="Glavina del Rio T."/>
            <person name="Hammon N."/>
            <person name="Israni S."/>
            <person name="Pitluck S."/>
            <person name="Brettin T."/>
            <person name="Bruce D."/>
            <person name="Han C."/>
            <person name="Tapia R."/>
            <person name="Gilna P."/>
            <person name="Chertkov O."/>
            <person name="Saunders E."/>
            <person name="Schmutz J."/>
            <person name="Larimer F."/>
            <person name="Land M."/>
            <person name="Kyrpides N."/>
            <person name="Lykidis A."/>
            <person name="Moran M.A."/>
            <person name="Belas R."/>
            <person name="Ye W."/>
            <person name="Buchan A."/>
            <person name="Gonzalez J.M."/>
            <person name="Schell M.A."/>
            <person name="Richardson P."/>
        </authorList>
    </citation>
    <scope>NUCLEOTIDE SEQUENCE [LARGE SCALE GENOMIC DNA]</scope>
    <source>
        <strain>CCS1</strain>
    </source>
</reference>
<sequence length="160" mass="17121">MIFETLDEFAGAVPPMRGLIGLDLGTKTIGVALSDRLLTSASALETVKRKKFGVDADALAGLIAKHEVGGIILGLPRNMDGSEGPRAQATRAFALNLSRRGDFAHLALGFWDERLSTVAAERALIAADTSRKRRSEVIDAVAASYILQGALDRLRHLRAV</sequence>
<accession>Q28QB4</accession>
<name>YQGF_JANSC</name>
<keyword id="KW-0963">Cytoplasm</keyword>
<keyword id="KW-0378">Hydrolase</keyword>
<keyword id="KW-0540">Nuclease</keyword>
<keyword id="KW-1185">Reference proteome</keyword>
<keyword id="KW-0690">Ribosome biogenesis</keyword>
<evidence type="ECO:0000255" key="1">
    <source>
        <dbReference type="HAMAP-Rule" id="MF_00651"/>
    </source>
</evidence>
<evidence type="ECO:0000305" key="2"/>
<comment type="function">
    <text evidence="1">Could be a nuclease involved in processing of the 5'-end of pre-16S rRNA.</text>
</comment>
<comment type="subcellular location">
    <subcellularLocation>
        <location evidence="1">Cytoplasm</location>
    </subcellularLocation>
</comment>
<comment type="similarity">
    <text evidence="1">Belongs to the YqgF nuclease family.</text>
</comment>
<comment type="sequence caution" evidence="2">
    <conflict type="erroneous initiation">
        <sequence resource="EMBL-CDS" id="ABD55098"/>
    </conflict>
    <text>Truncated N-terminus.</text>
</comment>
<gene>
    <name type="ordered locus">Jann_2181</name>
</gene>
<proteinExistence type="inferred from homology"/>
<feature type="chain" id="PRO_0000257541" description="Putative pre-16S rRNA nuclease">
    <location>
        <begin position="1"/>
        <end position="160"/>
    </location>
</feature>
<dbReference type="EC" id="3.1.-.-" evidence="1"/>
<dbReference type="EMBL" id="CP000264">
    <property type="protein sequence ID" value="ABD55098.1"/>
    <property type="status" value="ALT_INIT"/>
    <property type="molecule type" value="Genomic_DNA"/>
</dbReference>
<dbReference type="RefSeq" id="WP_044006672.1">
    <property type="nucleotide sequence ID" value="NC_007802.1"/>
</dbReference>
<dbReference type="SMR" id="Q28QB4"/>
<dbReference type="STRING" id="290400.Jann_2181"/>
<dbReference type="KEGG" id="jan:Jann_2181"/>
<dbReference type="eggNOG" id="COG0816">
    <property type="taxonomic scope" value="Bacteria"/>
</dbReference>
<dbReference type="HOGENOM" id="CLU_098240_1_1_5"/>
<dbReference type="OrthoDB" id="9796140at2"/>
<dbReference type="Proteomes" id="UP000008326">
    <property type="component" value="Chromosome"/>
</dbReference>
<dbReference type="GO" id="GO:0005829">
    <property type="term" value="C:cytosol"/>
    <property type="evidence" value="ECO:0007669"/>
    <property type="project" value="TreeGrafter"/>
</dbReference>
<dbReference type="GO" id="GO:0004518">
    <property type="term" value="F:nuclease activity"/>
    <property type="evidence" value="ECO:0007669"/>
    <property type="project" value="UniProtKB-KW"/>
</dbReference>
<dbReference type="GO" id="GO:0000967">
    <property type="term" value="P:rRNA 5'-end processing"/>
    <property type="evidence" value="ECO:0007669"/>
    <property type="project" value="UniProtKB-UniRule"/>
</dbReference>
<dbReference type="CDD" id="cd16964">
    <property type="entry name" value="YqgF"/>
    <property type="match status" value="1"/>
</dbReference>
<dbReference type="Gene3D" id="3.30.420.140">
    <property type="entry name" value="YqgF/RNase H-like domain"/>
    <property type="match status" value="1"/>
</dbReference>
<dbReference type="HAMAP" id="MF_00651">
    <property type="entry name" value="Nuclease_YqgF"/>
    <property type="match status" value="1"/>
</dbReference>
<dbReference type="InterPro" id="IPR012337">
    <property type="entry name" value="RNaseH-like_sf"/>
</dbReference>
<dbReference type="InterPro" id="IPR005227">
    <property type="entry name" value="YqgF"/>
</dbReference>
<dbReference type="InterPro" id="IPR006641">
    <property type="entry name" value="YqgF/RNaseH-like_dom"/>
</dbReference>
<dbReference type="InterPro" id="IPR037027">
    <property type="entry name" value="YqgF/RNaseH-like_dom_sf"/>
</dbReference>
<dbReference type="NCBIfam" id="TIGR00250">
    <property type="entry name" value="RNAse_H_YqgF"/>
    <property type="match status" value="1"/>
</dbReference>
<dbReference type="PANTHER" id="PTHR33317">
    <property type="entry name" value="POLYNUCLEOTIDYL TRANSFERASE, RIBONUCLEASE H-LIKE SUPERFAMILY PROTEIN"/>
    <property type="match status" value="1"/>
</dbReference>
<dbReference type="PANTHER" id="PTHR33317:SF4">
    <property type="entry name" value="POLYNUCLEOTIDYL TRANSFERASE, RIBONUCLEASE H-LIKE SUPERFAMILY PROTEIN"/>
    <property type="match status" value="1"/>
</dbReference>
<dbReference type="Pfam" id="PF03652">
    <property type="entry name" value="RuvX"/>
    <property type="match status" value="1"/>
</dbReference>
<dbReference type="SMART" id="SM00732">
    <property type="entry name" value="YqgFc"/>
    <property type="match status" value="1"/>
</dbReference>
<dbReference type="SUPFAM" id="SSF53098">
    <property type="entry name" value="Ribonuclease H-like"/>
    <property type="match status" value="1"/>
</dbReference>